<name>FLIDP_VIBPA</name>
<organism>
    <name type="scientific">Vibrio parahaemolyticus serotype O3:K6 (strain RIMD 2210633)</name>
    <dbReference type="NCBI Taxonomy" id="223926"/>
    <lineage>
        <taxon>Bacteria</taxon>
        <taxon>Pseudomonadati</taxon>
        <taxon>Pseudomonadota</taxon>
        <taxon>Gammaproteobacteria</taxon>
        <taxon>Vibrionales</taxon>
        <taxon>Vibrionaceae</taxon>
        <taxon>Vibrio</taxon>
    </lineage>
</organism>
<accession>Q56705</accession>
<dbReference type="EMBL" id="AF069392">
    <property type="protein sequence ID" value="AAC27803.1"/>
    <property type="molecule type" value="Genomic_DNA"/>
</dbReference>
<dbReference type="EMBL" id="BA000031">
    <property type="protein sequence ID" value="BAC60519.1"/>
    <property type="molecule type" value="Genomic_DNA"/>
</dbReference>
<dbReference type="PIR" id="S71032">
    <property type="entry name" value="S71032"/>
</dbReference>
<dbReference type="RefSeq" id="NP_798635.1">
    <property type="nucleotide sequence ID" value="NC_004603.1"/>
</dbReference>
<dbReference type="SMR" id="Q56705"/>
<dbReference type="GeneID" id="1189769"/>
<dbReference type="KEGG" id="vpa:VP2256"/>
<dbReference type="PATRIC" id="fig|223926.6.peg.2159"/>
<dbReference type="eggNOG" id="COG1345">
    <property type="taxonomic scope" value="Bacteria"/>
</dbReference>
<dbReference type="HOGENOM" id="CLU_015182_2_0_6"/>
<dbReference type="Proteomes" id="UP000002493">
    <property type="component" value="Chromosome 1"/>
</dbReference>
<dbReference type="GO" id="GO:0009421">
    <property type="term" value="C:bacterial-type flagellum filament cap"/>
    <property type="evidence" value="ECO:0007669"/>
    <property type="project" value="InterPro"/>
</dbReference>
<dbReference type="GO" id="GO:0009424">
    <property type="term" value="C:bacterial-type flagellum hook"/>
    <property type="evidence" value="ECO:0007669"/>
    <property type="project" value="InterPro"/>
</dbReference>
<dbReference type="GO" id="GO:0005576">
    <property type="term" value="C:extracellular region"/>
    <property type="evidence" value="ECO:0007669"/>
    <property type="project" value="UniProtKB-SubCell"/>
</dbReference>
<dbReference type="GO" id="GO:0071973">
    <property type="term" value="P:bacterial-type flagellum-dependent cell motility"/>
    <property type="evidence" value="ECO:0007669"/>
    <property type="project" value="TreeGrafter"/>
</dbReference>
<dbReference type="GO" id="GO:0007155">
    <property type="term" value="P:cell adhesion"/>
    <property type="evidence" value="ECO:0007669"/>
    <property type="project" value="InterPro"/>
</dbReference>
<dbReference type="InterPro" id="IPR010810">
    <property type="entry name" value="Flagellin_hook_IN_motif"/>
</dbReference>
<dbReference type="InterPro" id="IPR040026">
    <property type="entry name" value="FliD"/>
</dbReference>
<dbReference type="InterPro" id="IPR010809">
    <property type="entry name" value="FliD_C"/>
</dbReference>
<dbReference type="InterPro" id="IPR003481">
    <property type="entry name" value="FliD_N"/>
</dbReference>
<dbReference type="NCBIfam" id="NF006435">
    <property type="entry name" value="PRK08724.1"/>
    <property type="match status" value="1"/>
</dbReference>
<dbReference type="PANTHER" id="PTHR30288">
    <property type="entry name" value="FLAGELLAR CAP/ASSEMBLY PROTEIN FLID"/>
    <property type="match status" value="1"/>
</dbReference>
<dbReference type="PANTHER" id="PTHR30288:SF0">
    <property type="entry name" value="FLAGELLAR HOOK-ASSOCIATED PROTEIN 2"/>
    <property type="match status" value="1"/>
</dbReference>
<dbReference type="Pfam" id="PF07196">
    <property type="entry name" value="Flagellin_IN"/>
    <property type="match status" value="1"/>
</dbReference>
<dbReference type="Pfam" id="PF07195">
    <property type="entry name" value="FliD_C"/>
    <property type="match status" value="1"/>
</dbReference>
<dbReference type="Pfam" id="PF02465">
    <property type="entry name" value="FliD_N"/>
    <property type="match status" value="1"/>
</dbReference>
<proteinExistence type="inferred from homology"/>
<reference key="1">
    <citation type="journal article" date="1995" name="J. Bacteriol.">
        <title>Genetic and molecular characterization of the polar flagellum of Vibrio parahaemolyticus.</title>
        <authorList>
            <person name="McCarter L.L."/>
        </authorList>
    </citation>
    <scope>NUCLEOTIDE SEQUENCE [GENOMIC DNA]</scope>
    <source>
        <strain>BB22</strain>
    </source>
</reference>
<reference key="2">
    <citation type="journal article" date="2003" name="Lancet">
        <title>Genome sequence of Vibrio parahaemolyticus: a pathogenic mechanism distinct from that of V. cholerae.</title>
        <authorList>
            <person name="Makino K."/>
            <person name="Oshima K."/>
            <person name="Kurokawa K."/>
            <person name="Yokoyama K."/>
            <person name="Uda T."/>
            <person name="Tagomori K."/>
            <person name="Iijima Y."/>
            <person name="Najima M."/>
            <person name="Nakano M."/>
            <person name="Yamashita A."/>
            <person name="Kubota Y."/>
            <person name="Kimura S."/>
            <person name="Yasunaga T."/>
            <person name="Honda T."/>
            <person name="Shinagawa H."/>
            <person name="Hattori M."/>
            <person name="Iida T."/>
        </authorList>
    </citation>
    <scope>NUCLEOTIDE SEQUENCE [LARGE SCALE GENOMIC DNA]</scope>
    <source>
        <strain>RIMD 2210633</strain>
    </source>
</reference>
<gene>
    <name type="primary">fliDP</name>
    <name type="synonym">flaH</name>
    <name type="ordered locus">VP2256</name>
</gene>
<keyword id="KW-0975">Bacterial flagellum</keyword>
<keyword id="KW-0175">Coiled coil</keyword>
<keyword id="KW-0964">Secreted</keyword>
<sequence>MSLGPVGMSGGMDINSMVSKIVDAERVPKQQRIDNDRTTINASISAYGRLRESLDTMKNLMANFRQEKAFAVRTVETTDDNIVSATATTDAIAGKYAIDVLQLAQSHKVASDVLPEDAKFGPGKLQISLGDDRFNIEVRSRSKLIDVVRGINGAKDNPGVRASVINDVEGPRLILASNLSGKDHQIKVSVEAERGNPLKYFEYQTLEDRVNALEEARAAAEEVLGPLQAPQQPDQPEILDENGNPLPPEAQKAADNAQDDAQDDASQEPISAAGAEAAKAGQEAIDKANQRSSLRPEERIPGWTETASGTLLDSYEEPELELDEKAIEKAPDVPGWNNAASGTLTDSYVTTKEAKQLLEQEKAEIEQKIADEKQELDAKVERGELSEEQAKQIHRAKLDPQERERLEKIDEAEAKIAKAQSSFEEYLGMTEVQAGQDSEVLLDGVAKLSSHNNVIEDAIEGVDLTLKGKSEPNKPPAEIGVEYDRQSVRSDIENFVSAYNSFYQTSQALSSVDPTTGQKGPLAGDSTVRSADSRLKAVFSSRIDQAPENLKSLTEFGITTTRQGTLEINYDMLDRQLNNNFNELEKFFGGNTGFAKRIEDAIHGITGITGSIRTREKSLTEQNYRLNDDQAALDRRMEGLEKRTHAKFTAMQDATGKMQGQLGALMSALG</sequence>
<evidence type="ECO:0000250" key="1"/>
<evidence type="ECO:0000255" key="2"/>
<evidence type="ECO:0000256" key="3">
    <source>
        <dbReference type="SAM" id="MobiDB-lite"/>
    </source>
</evidence>
<evidence type="ECO:0000305" key="4"/>
<protein>
    <recommendedName>
        <fullName>Polar flagellar hook-associated protein 2</fullName>
        <shortName>HAP2</shortName>
    </recommendedName>
    <alternativeName>
        <fullName>Filament cap protein</fullName>
    </alternativeName>
    <alternativeName>
        <fullName>Flagellar cap protein</fullName>
    </alternativeName>
</protein>
<comment type="function">
    <text>Required for the morphogenesis and for the elongation of the flagellar filament by facilitating polymerization of the flagellin monomers at the tip of growing filament. Forms a capping structure, which prevents flagellin subunits (transported through the central channel of the flagellum) from leaking out without polymerization at the distal end. Important for swimming motility.</text>
</comment>
<comment type="subunit">
    <text evidence="1">Homopentamer.</text>
</comment>
<comment type="subcellular location">
    <subcellularLocation>
        <location>Secreted</location>
    </subcellularLocation>
    <subcellularLocation>
        <location>Bacterial flagellum</location>
    </subcellularLocation>
</comment>
<comment type="miscellaneous">
    <text>V.parahaemolyticus possesses two flagellar systems: a single polar flagellum propels the bacterium in liquid (swimming), while multiple lateral (peritrichous) flagella move the bacterium over surfaces (swarming). The polar flagellum is synthesized constitutively but lateral flagella are produced only under conditions in which the polar flagellum is not functional.</text>
</comment>
<comment type="similarity">
    <text evidence="4">Belongs to the FliD family.</text>
</comment>
<feature type="chain" id="PRO_0000177030" description="Polar flagellar hook-associated protein 2">
    <location>
        <begin position="1"/>
        <end position="670"/>
    </location>
</feature>
<feature type="region of interest" description="Disordered" evidence="3">
    <location>
        <begin position="226"/>
        <end position="300"/>
    </location>
</feature>
<feature type="coiled-coil region" evidence="2">
    <location>
        <begin position="342"/>
        <end position="428"/>
    </location>
</feature>
<feature type="compositionally biased region" description="Acidic residues" evidence="3">
    <location>
        <begin position="257"/>
        <end position="266"/>
    </location>
</feature>
<feature type="compositionally biased region" description="Low complexity" evidence="3">
    <location>
        <begin position="272"/>
        <end position="283"/>
    </location>
</feature>
<feature type="compositionally biased region" description="Basic and acidic residues" evidence="3">
    <location>
        <begin position="284"/>
        <end position="300"/>
    </location>
</feature>
<feature type="sequence conflict" description="In Ref. 1." evidence="4" ref="1">
    <original>D</original>
    <variation>G</variation>
    <location>
        <position position="260"/>
    </location>
</feature>
<feature type="sequence conflict" description="In Ref. 1." evidence="4" ref="1">
    <location>
        <begin position="262"/>
        <end position="265"/>
    </location>
</feature>